<dbReference type="EMBL" id="AB006463">
    <property type="protein sequence ID" value="BAA74429.1"/>
    <property type="molecule type" value="mRNA"/>
</dbReference>
<dbReference type="EMBL" id="AB017361">
    <property type="protein sequence ID" value="BAA36165.1"/>
    <property type="molecule type" value="Genomic_DNA"/>
</dbReference>
<dbReference type="EMBL" id="AF173010">
    <property type="protein sequence ID" value="AAG38960.1"/>
    <property type="molecule type" value="mRNA"/>
</dbReference>
<dbReference type="EMBL" id="AK010345">
    <property type="protein sequence ID" value="BAB26868.1"/>
    <property type="molecule type" value="mRNA"/>
</dbReference>
<dbReference type="EMBL" id="AK027915">
    <property type="protein sequence ID" value="BAC25663.1"/>
    <property type="molecule type" value="mRNA"/>
</dbReference>
<dbReference type="EMBL" id="AK152805">
    <property type="protein sequence ID" value="BAE31510.1"/>
    <property type="molecule type" value="mRNA"/>
</dbReference>
<dbReference type="EMBL" id="AK165472">
    <property type="protein sequence ID" value="BAE38209.1"/>
    <property type="molecule type" value="mRNA"/>
</dbReference>
<dbReference type="EMBL" id="BC003714">
    <property type="protein sequence ID" value="AAH03714.1"/>
    <property type="molecule type" value="mRNA"/>
</dbReference>
<dbReference type="EMBL" id="BC054385">
    <property type="protein sequence ID" value="AAH54385.1"/>
    <property type="molecule type" value="mRNA"/>
</dbReference>
<dbReference type="CCDS" id="CCDS21392.1"/>
<dbReference type="RefSeq" id="NP_001278204.1">
    <property type="nucleotide sequence ID" value="NM_001291275.1"/>
</dbReference>
<dbReference type="RefSeq" id="NP_001278205.1">
    <property type="nucleotide sequence ID" value="NM_001291276.1"/>
</dbReference>
<dbReference type="RefSeq" id="NP_036000.1">
    <property type="nucleotide sequence ID" value="NM_011870.6"/>
</dbReference>
<dbReference type="SMR" id="Q9Z0F4"/>
<dbReference type="FunCoup" id="Q9Z0F4">
    <property type="interactions" value="286"/>
</dbReference>
<dbReference type="STRING" id="10090.ENSMUSP00000070901"/>
<dbReference type="PhosphoSitePlus" id="Q9Z0F4"/>
<dbReference type="SwissPalm" id="Q9Z0F4"/>
<dbReference type="PaxDb" id="10090-ENSMUSP00000070901"/>
<dbReference type="PeptideAtlas" id="Q9Z0F4"/>
<dbReference type="ProteomicsDB" id="283622"/>
<dbReference type="Antibodypedia" id="28761">
    <property type="antibodies" value="395 antibodies from 35 providers"/>
</dbReference>
<dbReference type="DNASU" id="23991"/>
<dbReference type="Ensembl" id="ENSMUST00000065163.15">
    <property type="protein sequence ID" value="ENSMUSP00000070901.9"/>
    <property type="gene ID" value="ENSMUSG00000030538.16"/>
</dbReference>
<dbReference type="GeneID" id="23991"/>
<dbReference type="KEGG" id="mmu:23991"/>
<dbReference type="UCSC" id="uc009hzs.2">
    <property type="organism name" value="mouse"/>
</dbReference>
<dbReference type="AGR" id="MGI:1344418"/>
<dbReference type="CTD" id="10519"/>
<dbReference type="MGI" id="MGI:1344418">
    <property type="gene designation" value="Cib1"/>
</dbReference>
<dbReference type="VEuPathDB" id="HostDB:ENSMUSG00000030538"/>
<dbReference type="eggNOG" id="KOG0034">
    <property type="taxonomic scope" value="Eukaryota"/>
</dbReference>
<dbReference type="GeneTree" id="ENSGT00940000158927"/>
<dbReference type="HOGENOM" id="CLU_061288_6_1_1"/>
<dbReference type="InParanoid" id="Q9Z0F4"/>
<dbReference type="OMA" id="HAHQKFK"/>
<dbReference type="OrthoDB" id="114727at2759"/>
<dbReference type="PhylomeDB" id="Q9Z0F4"/>
<dbReference type="TreeFam" id="TF313865"/>
<dbReference type="BioGRID-ORCS" id="23991">
    <property type="hits" value="2 hits in 76 CRISPR screens"/>
</dbReference>
<dbReference type="ChiTaRS" id="Cib1">
    <property type="organism name" value="mouse"/>
</dbReference>
<dbReference type="PRO" id="PR:Q9Z0F4"/>
<dbReference type="Proteomes" id="UP000000589">
    <property type="component" value="Chromosome 7"/>
</dbReference>
<dbReference type="RNAct" id="Q9Z0F4">
    <property type="molecule type" value="protein"/>
</dbReference>
<dbReference type="Bgee" id="ENSMUSG00000030538">
    <property type="expression patterns" value="Expressed in spermatocyte and 259 other cell types or tissues"/>
</dbReference>
<dbReference type="ExpressionAtlas" id="Q9Z0F4">
    <property type="expression patterns" value="baseline and differential"/>
</dbReference>
<dbReference type="GO" id="GO:0016324">
    <property type="term" value="C:apical plasma membrane"/>
    <property type="evidence" value="ECO:0007669"/>
    <property type="project" value="UniProtKB-SubCell"/>
</dbReference>
<dbReference type="GO" id="GO:0071944">
    <property type="term" value="C:cell periphery"/>
    <property type="evidence" value="ECO:0000250"/>
    <property type="project" value="UniProtKB"/>
</dbReference>
<dbReference type="GO" id="GO:0005813">
    <property type="term" value="C:centrosome"/>
    <property type="evidence" value="ECO:0000250"/>
    <property type="project" value="UniProtKB"/>
</dbReference>
<dbReference type="GO" id="GO:0005737">
    <property type="term" value="C:cytoplasm"/>
    <property type="evidence" value="ECO:0000314"/>
    <property type="project" value="BHF-UCL"/>
</dbReference>
<dbReference type="GO" id="GO:0005783">
    <property type="term" value="C:endoplasmic reticulum"/>
    <property type="evidence" value="ECO:0000250"/>
    <property type="project" value="HGNC-UCL"/>
</dbReference>
<dbReference type="GO" id="GO:0032433">
    <property type="term" value="C:filopodium tip"/>
    <property type="evidence" value="ECO:0000250"/>
    <property type="project" value="UniProtKB"/>
</dbReference>
<dbReference type="GO" id="GO:0030426">
    <property type="term" value="C:growth cone"/>
    <property type="evidence" value="ECO:0000250"/>
    <property type="project" value="UniProtKB"/>
</dbReference>
<dbReference type="GO" id="GO:0030027">
    <property type="term" value="C:lamellipodium"/>
    <property type="evidence" value="ECO:0000250"/>
    <property type="project" value="UniProtKB"/>
</dbReference>
<dbReference type="GO" id="GO:0016020">
    <property type="term" value="C:membrane"/>
    <property type="evidence" value="ECO:0000314"/>
    <property type="project" value="HGNC-UCL"/>
</dbReference>
<dbReference type="GO" id="GO:0043005">
    <property type="term" value="C:neuron projection"/>
    <property type="evidence" value="ECO:0000250"/>
    <property type="project" value="UniProtKB"/>
</dbReference>
<dbReference type="GO" id="GO:0043025">
    <property type="term" value="C:neuronal cell body"/>
    <property type="evidence" value="ECO:0000250"/>
    <property type="project" value="UniProtKB"/>
</dbReference>
<dbReference type="GO" id="GO:0016604">
    <property type="term" value="C:nuclear body"/>
    <property type="evidence" value="ECO:0007669"/>
    <property type="project" value="Ensembl"/>
</dbReference>
<dbReference type="GO" id="GO:0005654">
    <property type="term" value="C:nucleoplasm"/>
    <property type="evidence" value="ECO:0000250"/>
    <property type="project" value="HGNC-UCL"/>
</dbReference>
<dbReference type="GO" id="GO:0005634">
    <property type="term" value="C:nucleus"/>
    <property type="evidence" value="ECO:0000250"/>
    <property type="project" value="UniProtKB"/>
</dbReference>
<dbReference type="GO" id="GO:0043204">
    <property type="term" value="C:perikaryon"/>
    <property type="evidence" value="ECO:0007669"/>
    <property type="project" value="UniProtKB-SubCell"/>
</dbReference>
<dbReference type="GO" id="GO:0048471">
    <property type="term" value="C:perinuclear region of cytoplasm"/>
    <property type="evidence" value="ECO:0000250"/>
    <property type="project" value="UniProtKB"/>
</dbReference>
<dbReference type="GO" id="GO:0005886">
    <property type="term" value="C:plasma membrane"/>
    <property type="evidence" value="ECO:0000250"/>
    <property type="project" value="UniProtKB"/>
</dbReference>
<dbReference type="GO" id="GO:0032587">
    <property type="term" value="C:ruffle membrane"/>
    <property type="evidence" value="ECO:0007669"/>
    <property type="project" value="UniProtKB-SubCell"/>
</dbReference>
<dbReference type="GO" id="GO:0042383">
    <property type="term" value="C:sarcolemma"/>
    <property type="evidence" value="ECO:0000314"/>
    <property type="project" value="BHF-UCL"/>
</dbReference>
<dbReference type="GO" id="GO:0005509">
    <property type="term" value="F:calcium ion binding"/>
    <property type="evidence" value="ECO:0000250"/>
    <property type="project" value="HGNC-UCL"/>
</dbReference>
<dbReference type="GO" id="GO:0008427">
    <property type="term" value="F:calcium-dependent protein kinase inhibitor activity"/>
    <property type="evidence" value="ECO:0007669"/>
    <property type="project" value="Ensembl"/>
</dbReference>
<dbReference type="GO" id="GO:0043495">
    <property type="term" value="F:protein-membrane adaptor activity"/>
    <property type="evidence" value="ECO:0000315"/>
    <property type="project" value="BHF-UCL"/>
</dbReference>
<dbReference type="GO" id="GO:0031267">
    <property type="term" value="F:small GTPase binding"/>
    <property type="evidence" value="ECO:0007669"/>
    <property type="project" value="Ensembl"/>
</dbReference>
<dbReference type="GO" id="GO:0044325">
    <property type="term" value="F:transmembrane transporter binding"/>
    <property type="evidence" value="ECO:0000353"/>
    <property type="project" value="BHF-UCL"/>
</dbReference>
<dbReference type="GO" id="GO:0001525">
    <property type="term" value="P:angiogenesis"/>
    <property type="evidence" value="ECO:0007669"/>
    <property type="project" value="UniProtKB-KW"/>
</dbReference>
<dbReference type="GO" id="GO:0006915">
    <property type="term" value="P:apoptotic process"/>
    <property type="evidence" value="ECO:0000250"/>
    <property type="project" value="HGNC-UCL"/>
</dbReference>
<dbReference type="GO" id="GO:0007155">
    <property type="term" value="P:cell adhesion"/>
    <property type="evidence" value="ECO:0007669"/>
    <property type="project" value="UniProtKB-KW"/>
</dbReference>
<dbReference type="GO" id="GO:0051301">
    <property type="term" value="P:cell division"/>
    <property type="evidence" value="ECO:0007669"/>
    <property type="project" value="UniProtKB-KW"/>
</dbReference>
<dbReference type="GO" id="GO:0071363">
    <property type="term" value="P:cellular response to growth factor stimulus"/>
    <property type="evidence" value="ECO:0000314"/>
    <property type="project" value="UniProtKB"/>
</dbReference>
<dbReference type="GO" id="GO:1990090">
    <property type="term" value="P:cellular response to nerve growth factor stimulus"/>
    <property type="evidence" value="ECO:0000250"/>
    <property type="project" value="UniProtKB"/>
</dbReference>
<dbReference type="GO" id="GO:0071356">
    <property type="term" value="P:cellular response to tumor necrosis factor"/>
    <property type="evidence" value="ECO:0000250"/>
    <property type="project" value="UniProtKB"/>
</dbReference>
<dbReference type="GO" id="GO:0031122">
    <property type="term" value="P:cytoplasmic microtubule organization"/>
    <property type="evidence" value="ECO:0000250"/>
    <property type="project" value="UniProtKB"/>
</dbReference>
<dbReference type="GO" id="GO:0006974">
    <property type="term" value="P:DNA damage response"/>
    <property type="evidence" value="ECO:0000250"/>
    <property type="project" value="HGNC-UCL"/>
</dbReference>
<dbReference type="GO" id="GO:0007113">
    <property type="term" value="P:endomitotic cell cycle"/>
    <property type="evidence" value="ECO:0000250"/>
    <property type="project" value="UniProtKB"/>
</dbReference>
<dbReference type="GO" id="GO:0043066">
    <property type="term" value="P:negative regulation of apoptotic process"/>
    <property type="evidence" value="ECO:0000315"/>
    <property type="project" value="UniProtKB"/>
</dbReference>
<dbReference type="GO" id="GO:0008285">
    <property type="term" value="P:negative regulation of cell population proliferation"/>
    <property type="evidence" value="ECO:0000250"/>
    <property type="project" value="UniProtKB"/>
</dbReference>
<dbReference type="GO" id="GO:0045653">
    <property type="term" value="P:negative regulation of megakaryocyte differentiation"/>
    <property type="evidence" value="ECO:0000315"/>
    <property type="project" value="UniProtKB"/>
</dbReference>
<dbReference type="GO" id="GO:0007026">
    <property type="term" value="P:negative regulation of microtubule depolymerization"/>
    <property type="evidence" value="ECO:0000250"/>
    <property type="project" value="UniProtKB"/>
</dbReference>
<dbReference type="GO" id="GO:0010977">
    <property type="term" value="P:negative regulation of neuron projection development"/>
    <property type="evidence" value="ECO:0000250"/>
    <property type="project" value="UniProtKB"/>
</dbReference>
<dbReference type="GO" id="GO:0051898">
    <property type="term" value="P:negative regulation of phosphatidylinositol 3-kinase/protein kinase B signal transduction"/>
    <property type="evidence" value="ECO:0000315"/>
    <property type="project" value="UniProtKB"/>
</dbReference>
<dbReference type="GO" id="GO:0001933">
    <property type="term" value="P:negative regulation of protein phosphorylation"/>
    <property type="evidence" value="ECO:0000315"/>
    <property type="project" value="UniProtKB"/>
</dbReference>
<dbReference type="GO" id="GO:0030220">
    <property type="term" value="P:platelet formation"/>
    <property type="evidence" value="ECO:0000315"/>
    <property type="project" value="UniProtKB"/>
</dbReference>
<dbReference type="GO" id="GO:0070886">
    <property type="term" value="P:positive regulation of calcineurin-NFAT signaling cascade"/>
    <property type="evidence" value="ECO:0000315"/>
    <property type="project" value="BHF-UCL"/>
</dbReference>
<dbReference type="GO" id="GO:0043085">
    <property type="term" value="P:positive regulation of catalytic activity"/>
    <property type="evidence" value="ECO:0000315"/>
    <property type="project" value="UniProtKB"/>
</dbReference>
<dbReference type="GO" id="GO:0033630">
    <property type="term" value="P:positive regulation of cell adhesion mediated by integrin"/>
    <property type="evidence" value="ECO:0000250"/>
    <property type="project" value="UniProtKB"/>
</dbReference>
<dbReference type="GO" id="GO:0030307">
    <property type="term" value="P:positive regulation of cell growth"/>
    <property type="evidence" value="ECO:0000315"/>
    <property type="project" value="UniProtKB"/>
</dbReference>
<dbReference type="GO" id="GO:0030335">
    <property type="term" value="P:positive regulation of cell migration"/>
    <property type="evidence" value="ECO:0000315"/>
    <property type="project" value="UniProtKB"/>
</dbReference>
<dbReference type="GO" id="GO:0090050">
    <property type="term" value="P:positive regulation of cell migration involved in sprouting angiogenesis"/>
    <property type="evidence" value="ECO:0000315"/>
    <property type="project" value="UniProtKB"/>
</dbReference>
<dbReference type="GO" id="GO:0008284">
    <property type="term" value="P:positive regulation of cell population proliferation"/>
    <property type="evidence" value="ECO:0000315"/>
    <property type="project" value="UniProtKB"/>
</dbReference>
<dbReference type="GO" id="GO:0001954">
    <property type="term" value="P:positive regulation of cell-matrix adhesion"/>
    <property type="evidence" value="ECO:0000315"/>
    <property type="project" value="UniProtKB"/>
</dbReference>
<dbReference type="GO" id="GO:0070374">
    <property type="term" value="P:positive regulation of ERK1 and ERK2 cascade"/>
    <property type="evidence" value="ECO:0000315"/>
    <property type="project" value="UniProtKB"/>
</dbReference>
<dbReference type="GO" id="GO:2000256">
    <property type="term" value="P:positive regulation of male germ cell proliferation"/>
    <property type="evidence" value="ECO:0000315"/>
    <property type="project" value="UniProtKB"/>
</dbReference>
<dbReference type="GO" id="GO:0051092">
    <property type="term" value="P:positive regulation of NF-kappaB transcription factor activity"/>
    <property type="evidence" value="ECO:0000250"/>
    <property type="project" value="UniProtKB"/>
</dbReference>
<dbReference type="GO" id="GO:1903078">
    <property type="term" value="P:positive regulation of protein localization to plasma membrane"/>
    <property type="evidence" value="ECO:0000315"/>
    <property type="project" value="BHF-UCL"/>
</dbReference>
<dbReference type="GO" id="GO:0001934">
    <property type="term" value="P:positive regulation of protein phosphorylation"/>
    <property type="evidence" value="ECO:0000315"/>
    <property type="project" value="UniProtKB"/>
</dbReference>
<dbReference type="GO" id="GO:0071902">
    <property type="term" value="P:positive regulation of protein serine/threonine kinase activity"/>
    <property type="evidence" value="ECO:0000315"/>
    <property type="project" value="UniProtKB"/>
</dbReference>
<dbReference type="GO" id="GO:0090314">
    <property type="term" value="P:positive regulation of protein targeting to membrane"/>
    <property type="evidence" value="ECO:0000250"/>
    <property type="project" value="UniProtKB"/>
</dbReference>
<dbReference type="GO" id="GO:1900026">
    <property type="term" value="P:positive regulation of substrate adhesion-dependent cell spreading"/>
    <property type="evidence" value="ECO:0000250"/>
    <property type="project" value="UniProtKB"/>
</dbReference>
<dbReference type="GO" id="GO:0051302">
    <property type="term" value="P:regulation of cell division"/>
    <property type="evidence" value="ECO:0000250"/>
    <property type="project" value="UniProtKB"/>
</dbReference>
<dbReference type="GO" id="GO:0042127">
    <property type="term" value="P:regulation of cell population proliferation"/>
    <property type="evidence" value="ECO:0000250"/>
    <property type="project" value="UniProtKB"/>
</dbReference>
<dbReference type="GO" id="GO:0002931">
    <property type="term" value="P:response to ischemia"/>
    <property type="evidence" value="ECO:0000314"/>
    <property type="project" value="UniProtKB"/>
</dbReference>
<dbReference type="GO" id="GO:0007286">
    <property type="term" value="P:spermatid development"/>
    <property type="evidence" value="ECO:0000315"/>
    <property type="project" value="UniProtKB"/>
</dbReference>
<dbReference type="GO" id="GO:0038163">
    <property type="term" value="P:thrombopoietin-mediated signaling pathway"/>
    <property type="evidence" value="ECO:0000315"/>
    <property type="project" value="UniProtKB"/>
</dbReference>
<dbReference type="CDD" id="cd00051">
    <property type="entry name" value="EFh"/>
    <property type="match status" value="1"/>
</dbReference>
<dbReference type="FunFam" id="1.10.238.10:FF:000079">
    <property type="entry name" value="Calcium and integrin-binding family member 2"/>
    <property type="match status" value="1"/>
</dbReference>
<dbReference type="Gene3D" id="1.10.238.10">
    <property type="entry name" value="EF-hand"/>
    <property type="match status" value="2"/>
</dbReference>
<dbReference type="InterPro" id="IPR051433">
    <property type="entry name" value="CIBP"/>
</dbReference>
<dbReference type="InterPro" id="IPR011992">
    <property type="entry name" value="EF-hand-dom_pair"/>
</dbReference>
<dbReference type="InterPro" id="IPR018247">
    <property type="entry name" value="EF_Hand_1_Ca_BS"/>
</dbReference>
<dbReference type="InterPro" id="IPR002048">
    <property type="entry name" value="EF_hand_dom"/>
</dbReference>
<dbReference type="PANTHER" id="PTHR45791">
    <property type="entry name" value="CALCIUM AND INTEGRIN BINDING FAMILY MEMBER 2"/>
    <property type="match status" value="1"/>
</dbReference>
<dbReference type="PANTHER" id="PTHR45791:SF3">
    <property type="entry name" value="CALCIUM AND INTEGRIN-BINDING PROTEIN 1"/>
    <property type="match status" value="1"/>
</dbReference>
<dbReference type="Pfam" id="PF13499">
    <property type="entry name" value="EF-hand_7"/>
    <property type="match status" value="1"/>
</dbReference>
<dbReference type="SMART" id="SM00054">
    <property type="entry name" value="EFh"/>
    <property type="match status" value="2"/>
</dbReference>
<dbReference type="SUPFAM" id="SSF47473">
    <property type="entry name" value="EF-hand"/>
    <property type="match status" value="1"/>
</dbReference>
<dbReference type="PROSITE" id="PS00018">
    <property type="entry name" value="EF_HAND_1"/>
    <property type="match status" value="2"/>
</dbReference>
<dbReference type="PROSITE" id="PS50222">
    <property type="entry name" value="EF_HAND_2"/>
    <property type="match status" value="2"/>
</dbReference>
<keyword id="KW-0037">Angiogenesis</keyword>
<keyword id="KW-0053">Apoptosis</keyword>
<keyword id="KW-0106">Calcium</keyword>
<keyword id="KW-0130">Cell adhesion</keyword>
<keyword id="KW-0131">Cell cycle</keyword>
<keyword id="KW-0132">Cell division</keyword>
<keyword id="KW-1003">Cell membrane</keyword>
<keyword id="KW-0966">Cell projection</keyword>
<keyword id="KW-0963">Cytoplasm</keyword>
<keyword id="KW-0206">Cytoskeleton</keyword>
<keyword id="KW-0221">Differentiation</keyword>
<keyword id="KW-0449">Lipoprotein</keyword>
<keyword id="KW-0460">Magnesium</keyword>
<keyword id="KW-0472">Membrane</keyword>
<keyword id="KW-0479">Metal-binding</keyword>
<keyword id="KW-0519">Myristate</keyword>
<keyword id="KW-0539">Nucleus</keyword>
<keyword id="KW-1185">Reference proteome</keyword>
<keyword id="KW-0677">Repeat</keyword>
<keyword id="KW-0744">Spermatogenesis</keyword>
<sequence>MGGSGSRLSKELLAEYQDLTFLTKQEILLAHRRFCELLPPEQRTVEESLHTRVSFEQILSLPELKANPFKERICMVFSTSPTRDSLSFEDFLDLLSVFSDTATPDIKSHYAFRIFDFDDDGTLDREDLSQLVNCLTGEGEDTRLSASEMKQLIDNILEESDIDRDGTINLSEFQHVISRSPDFASSFKIVL</sequence>
<gene>
    <name type="primary">Cib1</name>
    <name type="synonym">Cib</name>
    <name type="synonym">Kip</name>
    <name type="synonym">Prkdcip</name>
</gene>
<organism>
    <name type="scientific">Mus musculus</name>
    <name type="common">Mouse</name>
    <dbReference type="NCBI Taxonomy" id="10090"/>
    <lineage>
        <taxon>Eukaryota</taxon>
        <taxon>Metazoa</taxon>
        <taxon>Chordata</taxon>
        <taxon>Craniata</taxon>
        <taxon>Vertebrata</taxon>
        <taxon>Euteleostomi</taxon>
        <taxon>Mammalia</taxon>
        <taxon>Eutheria</taxon>
        <taxon>Euarchontoglires</taxon>
        <taxon>Glires</taxon>
        <taxon>Rodentia</taxon>
        <taxon>Myomorpha</taxon>
        <taxon>Muroidea</taxon>
        <taxon>Muridae</taxon>
        <taxon>Murinae</taxon>
        <taxon>Mus</taxon>
        <taxon>Mus</taxon>
    </lineage>
</organism>
<evidence type="ECO:0000250" key="1"/>
<evidence type="ECO:0000250" key="2">
    <source>
        <dbReference type="UniProtKB" id="Q99828"/>
    </source>
</evidence>
<evidence type="ECO:0000255" key="3">
    <source>
        <dbReference type="PROSITE-ProRule" id="PRU00448"/>
    </source>
</evidence>
<evidence type="ECO:0000269" key="4">
    <source>
    </source>
</evidence>
<evidence type="ECO:0000269" key="5">
    <source>
    </source>
</evidence>
<evidence type="ECO:0000269" key="6">
    <source>
    </source>
</evidence>
<evidence type="ECO:0000269" key="7">
    <source>
    </source>
</evidence>
<evidence type="ECO:0000269" key="8">
    <source>
    </source>
</evidence>
<evidence type="ECO:0000269" key="9">
    <source>
    </source>
</evidence>
<evidence type="ECO:0000269" key="10">
    <source>
    </source>
</evidence>
<evidence type="ECO:0000269" key="11">
    <source>
    </source>
</evidence>
<evidence type="ECO:0000269" key="12">
    <source>
    </source>
</evidence>
<evidence type="ECO:0000269" key="13">
    <source>
    </source>
</evidence>
<proteinExistence type="evidence at protein level"/>
<accession>Q9Z0F4</accession>
<accession>Q3TN80</accession>
<protein>
    <recommendedName>
        <fullName>Calcium and integrin-binding protein 1</fullName>
        <shortName>CIB</shortName>
    </recommendedName>
    <alternativeName>
        <fullName>Calmyrin</fullName>
    </alternativeName>
    <alternativeName>
        <fullName>DNA-PKcs-interacting protein</fullName>
    </alternativeName>
    <alternativeName>
        <fullName>Kinase-interacting protein</fullName>
        <shortName>KIP</shortName>
    </alternativeName>
</protein>
<reference key="1">
    <citation type="journal article" date="1999" name="Mamm. Genome">
        <title>Structure, expression profile, and chromosomal location of a mouse gene homologous to human DNA-PKcs interacting protein (KIP) gene.</title>
        <authorList>
            <person name="Saito T."/>
            <person name="Seki N."/>
            <person name="Hattori A."/>
            <person name="Hayashi A."/>
            <person name="Abe M."/>
            <person name="Araki R."/>
            <person name="Fujimori A."/>
            <person name="Fukumura R."/>
            <person name="Kozuma S."/>
            <person name="Matsuda Y."/>
        </authorList>
    </citation>
    <scope>NUCLEOTIDE SEQUENCE [MRNA]</scope>
    <source>
        <strain>C57BL/6J</strain>
        <tissue>Fetal kidney</tissue>
    </source>
</reference>
<reference key="2">
    <citation type="journal article" date="2000" name="DNA Seq.">
        <title>Genomic structure of mouse and human genes for DNA-PKcs interacting protein (KIP).</title>
        <authorList>
            <person name="Hattori A."/>
            <person name="Seki N."/>
            <person name="Hayashi A."/>
            <person name="Kozuma S."/>
            <person name="Saito T."/>
        </authorList>
    </citation>
    <scope>NUCLEOTIDE SEQUENCE [GENOMIC DNA]</scope>
</reference>
<reference key="3">
    <citation type="submission" date="1999-07" db="EMBL/GenBank/DDBJ databases">
        <title>Cloning and tissue distribution of murine calcium and integrin binding protein, CIB.</title>
        <authorList>
            <person name="Naik M.U."/>
            <person name="Naik U.P."/>
        </authorList>
    </citation>
    <scope>NUCLEOTIDE SEQUENCE [MRNA]</scope>
</reference>
<reference key="4">
    <citation type="journal article" date="2005" name="Science">
        <title>The transcriptional landscape of the mammalian genome.</title>
        <authorList>
            <person name="Carninci P."/>
            <person name="Kasukawa T."/>
            <person name="Katayama S."/>
            <person name="Gough J."/>
            <person name="Frith M.C."/>
            <person name="Maeda N."/>
            <person name="Oyama R."/>
            <person name="Ravasi T."/>
            <person name="Lenhard B."/>
            <person name="Wells C."/>
            <person name="Kodzius R."/>
            <person name="Shimokawa K."/>
            <person name="Bajic V.B."/>
            <person name="Brenner S.E."/>
            <person name="Batalov S."/>
            <person name="Forrest A.R."/>
            <person name="Zavolan M."/>
            <person name="Davis M.J."/>
            <person name="Wilming L.G."/>
            <person name="Aidinis V."/>
            <person name="Allen J.E."/>
            <person name="Ambesi-Impiombato A."/>
            <person name="Apweiler R."/>
            <person name="Aturaliya R.N."/>
            <person name="Bailey T.L."/>
            <person name="Bansal M."/>
            <person name="Baxter L."/>
            <person name="Beisel K.W."/>
            <person name="Bersano T."/>
            <person name="Bono H."/>
            <person name="Chalk A.M."/>
            <person name="Chiu K.P."/>
            <person name="Choudhary V."/>
            <person name="Christoffels A."/>
            <person name="Clutterbuck D.R."/>
            <person name="Crowe M.L."/>
            <person name="Dalla E."/>
            <person name="Dalrymple B.P."/>
            <person name="de Bono B."/>
            <person name="Della Gatta G."/>
            <person name="di Bernardo D."/>
            <person name="Down T."/>
            <person name="Engstrom P."/>
            <person name="Fagiolini M."/>
            <person name="Faulkner G."/>
            <person name="Fletcher C.F."/>
            <person name="Fukushima T."/>
            <person name="Furuno M."/>
            <person name="Futaki S."/>
            <person name="Gariboldi M."/>
            <person name="Georgii-Hemming P."/>
            <person name="Gingeras T.R."/>
            <person name="Gojobori T."/>
            <person name="Green R.E."/>
            <person name="Gustincich S."/>
            <person name="Harbers M."/>
            <person name="Hayashi Y."/>
            <person name="Hensch T.K."/>
            <person name="Hirokawa N."/>
            <person name="Hill D."/>
            <person name="Huminiecki L."/>
            <person name="Iacono M."/>
            <person name="Ikeo K."/>
            <person name="Iwama A."/>
            <person name="Ishikawa T."/>
            <person name="Jakt M."/>
            <person name="Kanapin A."/>
            <person name="Katoh M."/>
            <person name="Kawasawa Y."/>
            <person name="Kelso J."/>
            <person name="Kitamura H."/>
            <person name="Kitano H."/>
            <person name="Kollias G."/>
            <person name="Krishnan S.P."/>
            <person name="Kruger A."/>
            <person name="Kummerfeld S.K."/>
            <person name="Kurochkin I.V."/>
            <person name="Lareau L.F."/>
            <person name="Lazarevic D."/>
            <person name="Lipovich L."/>
            <person name="Liu J."/>
            <person name="Liuni S."/>
            <person name="McWilliam S."/>
            <person name="Madan Babu M."/>
            <person name="Madera M."/>
            <person name="Marchionni L."/>
            <person name="Matsuda H."/>
            <person name="Matsuzawa S."/>
            <person name="Miki H."/>
            <person name="Mignone F."/>
            <person name="Miyake S."/>
            <person name="Morris K."/>
            <person name="Mottagui-Tabar S."/>
            <person name="Mulder N."/>
            <person name="Nakano N."/>
            <person name="Nakauchi H."/>
            <person name="Ng P."/>
            <person name="Nilsson R."/>
            <person name="Nishiguchi S."/>
            <person name="Nishikawa S."/>
            <person name="Nori F."/>
            <person name="Ohara O."/>
            <person name="Okazaki Y."/>
            <person name="Orlando V."/>
            <person name="Pang K.C."/>
            <person name="Pavan W.J."/>
            <person name="Pavesi G."/>
            <person name="Pesole G."/>
            <person name="Petrovsky N."/>
            <person name="Piazza S."/>
            <person name="Reed J."/>
            <person name="Reid J.F."/>
            <person name="Ring B.Z."/>
            <person name="Ringwald M."/>
            <person name="Rost B."/>
            <person name="Ruan Y."/>
            <person name="Salzberg S.L."/>
            <person name="Sandelin A."/>
            <person name="Schneider C."/>
            <person name="Schoenbach C."/>
            <person name="Sekiguchi K."/>
            <person name="Semple C.A."/>
            <person name="Seno S."/>
            <person name="Sessa L."/>
            <person name="Sheng Y."/>
            <person name="Shibata Y."/>
            <person name="Shimada H."/>
            <person name="Shimada K."/>
            <person name="Silva D."/>
            <person name="Sinclair B."/>
            <person name="Sperling S."/>
            <person name="Stupka E."/>
            <person name="Sugiura K."/>
            <person name="Sultana R."/>
            <person name="Takenaka Y."/>
            <person name="Taki K."/>
            <person name="Tammoja K."/>
            <person name="Tan S.L."/>
            <person name="Tang S."/>
            <person name="Taylor M.S."/>
            <person name="Tegner J."/>
            <person name="Teichmann S.A."/>
            <person name="Ueda H.R."/>
            <person name="van Nimwegen E."/>
            <person name="Verardo R."/>
            <person name="Wei C.L."/>
            <person name="Yagi K."/>
            <person name="Yamanishi H."/>
            <person name="Zabarovsky E."/>
            <person name="Zhu S."/>
            <person name="Zimmer A."/>
            <person name="Hide W."/>
            <person name="Bult C."/>
            <person name="Grimmond S.M."/>
            <person name="Teasdale R.D."/>
            <person name="Liu E.T."/>
            <person name="Brusic V."/>
            <person name="Quackenbush J."/>
            <person name="Wahlestedt C."/>
            <person name="Mattick J.S."/>
            <person name="Hume D.A."/>
            <person name="Kai C."/>
            <person name="Sasaki D."/>
            <person name="Tomaru Y."/>
            <person name="Fukuda S."/>
            <person name="Kanamori-Katayama M."/>
            <person name="Suzuki M."/>
            <person name="Aoki J."/>
            <person name="Arakawa T."/>
            <person name="Iida J."/>
            <person name="Imamura K."/>
            <person name="Itoh M."/>
            <person name="Kato T."/>
            <person name="Kawaji H."/>
            <person name="Kawagashira N."/>
            <person name="Kawashima T."/>
            <person name="Kojima M."/>
            <person name="Kondo S."/>
            <person name="Konno H."/>
            <person name="Nakano K."/>
            <person name="Ninomiya N."/>
            <person name="Nishio T."/>
            <person name="Okada M."/>
            <person name="Plessy C."/>
            <person name="Shibata K."/>
            <person name="Shiraki T."/>
            <person name="Suzuki S."/>
            <person name="Tagami M."/>
            <person name="Waki K."/>
            <person name="Watahiki A."/>
            <person name="Okamura-Oho Y."/>
            <person name="Suzuki H."/>
            <person name="Kawai J."/>
            <person name="Hayashizaki Y."/>
        </authorList>
    </citation>
    <scope>NUCLEOTIDE SEQUENCE [LARGE SCALE MRNA]</scope>
    <source>
        <strain>C57BL/6J</strain>
        <tissue>Bone marrow</tissue>
        <tissue>Kidney</tissue>
    </source>
</reference>
<reference key="5">
    <citation type="journal article" date="2004" name="Genome Res.">
        <title>The status, quality, and expansion of the NIH full-length cDNA project: the Mammalian Gene Collection (MGC).</title>
        <authorList>
            <consortium name="The MGC Project Team"/>
        </authorList>
    </citation>
    <scope>NUCLEOTIDE SEQUENCE [LARGE SCALE MRNA]</scope>
    <source>
        <strain>FVB/N</strain>
        <tissue>Colon</tissue>
        <tissue>Mammary gland</tissue>
    </source>
</reference>
<reference key="6">
    <citation type="journal article" date="2006" name="J. Cell Biol.">
        <title>CIB1 is an endogenous inhibitor of agonist-induced integrin alphaIIbbeta3 activation.</title>
        <authorList>
            <person name="Yuan W."/>
            <person name="Leisner T.M."/>
            <person name="McFadden A.W."/>
            <person name="Wang Z."/>
            <person name="Larson M.K."/>
            <person name="Clark S."/>
            <person name="Boudignon-Proudhon C."/>
            <person name="Lam S.C."/>
            <person name="Parise L.V."/>
        </authorList>
    </citation>
    <scope>SUBCELLULAR LOCATION</scope>
</reference>
<reference key="7">
    <citation type="journal article" date="2006" name="Mol. Cell. Biol.">
        <title>CIB1 is essential for mouse spermatogenesis.</title>
        <authorList>
            <person name="Yuan W."/>
            <person name="Leisner T.M."/>
            <person name="McFadden A.W."/>
            <person name="Clark S."/>
            <person name="Hiller S."/>
            <person name="Maeda N."/>
            <person name="O'Brien D.A."/>
            <person name="Parise L.V."/>
        </authorList>
    </citation>
    <scope>FUNCTION</scope>
    <scope>TISSUE SPECIFICITY</scope>
    <scope>DISRUPTION PHENOTYPE</scope>
</reference>
<reference key="8">
    <citation type="journal article" date="2007" name="Circ. Res.">
        <title>CIB1 regulates endothelial cells and ischemia-induced pathological and adaptive angiogenesis.</title>
        <authorList>
            <person name="Zayed M.A."/>
            <person name="Yuan W."/>
            <person name="Leisner T.M."/>
            <person name="Chalothorn D."/>
            <person name="McFadden A.W."/>
            <person name="Schaller M.D."/>
            <person name="Hartnett M.E."/>
            <person name="Faber J.E."/>
            <person name="Parise L.V."/>
        </authorList>
    </citation>
    <scope>FUNCTION</scope>
    <scope>TISSUE SPECIFICITY</scope>
</reference>
<reference key="9">
    <citation type="journal article" date="2007" name="J. Muscle Res. Cell Motil.">
        <title>CIB1 and CaBP1 bind to the myo1c regulatory domain.</title>
        <authorList>
            <person name="Tang N."/>
            <person name="Lin T."/>
            <person name="Yang J."/>
            <person name="Foskett J.K."/>
            <person name="Ostap E.M."/>
        </authorList>
    </citation>
    <scope>INTERACTION WITH MYO1C</scope>
</reference>
<reference key="10">
    <citation type="journal article" date="2008" name="Thromb. Haemost.">
        <title>Characterization of calcium- and integrin-binding protein 1 (CIB1) knockout platelets: potential compensation by CIB family members.</title>
        <authorList>
            <person name="Denofrio J.C."/>
            <person name="Yuan W."/>
            <person name="Temple B.R."/>
            <person name="Gentry H.R."/>
            <person name="Parise L.V."/>
        </authorList>
    </citation>
    <scope>INTERACTION WITH ITGA2B</scope>
    <scope>DISRUPTION PHENOTYPE</scope>
    <scope>TISSUE SPECIFICITY</scope>
</reference>
<reference key="11">
    <citation type="journal article" date="2009" name="J. Thromb. Haemost.">
        <title>CIB1 deficiency results in impaired thrombosis: the potential role of CIB1 in outside-in signaling through integrin alpha IIb beta 3.</title>
        <authorList>
            <person name="Naik M.U."/>
            <person name="Nigam A."/>
            <person name="Manrai P."/>
            <person name="Millili P."/>
            <person name="Czymmek K."/>
            <person name="Sullivan M."/>
            <person name="Naik U.P."/>
        </authorList>
    </citation>
    <scope>FUNCTION</scope>
    <scope>DISRUPTION PHENOTYPE</scope>
</reference>
<reference key="12">
    <citation type="journal article" date="2010" name="Cell">
        <title>A tissue-specific atlas of mouse protein phosphorylation and expression.</title>
        <authorList>
            <person name="Huttlin E.L."/>
            <person name="Jedrychowski M.P."/>
            <person name="Elias J.E."/>
            <person name="Goswami T."/>
            <person name="Rad R."/>
            <person name="Beausoleil S.A."/>
            <person name="Villen J."/>
            <person name="Haas W."/>
            <person name="Sowa M.E."/>
            <person name="Gygi S.P."/>
        </authorList>
    </citation>
    <scope>IDENTIFICATION BY MASS SPECTROMETRY [LARGE SCALE ANALYSIS]</scope>
    <source>
        <tissue>Kidney</tissue>
        <tissue>Liver</tissue>
        <tissue>Lung</tissue>
        <tissue>Pancreas</tissue>
        <tissue>Spleen</tissue>
        <tissue>Testis</tissue>
    </source>
</reference>
<reference key="13">
    <citation type="journal article" date="2010" name="J. Angiog. Res.">
        <title>Tumor growth and angiogenesis is impaired in CIB1 knockout mice.</title>
        <authorList>
            <person name="Zayed M.A."/>
            <person name="Yuan W."/>
            <person name="Chalothorn D."/>
            <person name="Faber J.E."/>
            <person name="Parise L.V."/>
        </authorList>
    </citation>
    <scope>FUNCTION</scope>
</reference>
<reference key="14">
    <citation type="journal article" date="2010" name="Nat. Med.">
        <title>CIB1 is a regulator of pathological cardiac hypertrophy.</title>
        <authorList>
            <person name="Heineke J."/>
            <person name="Auger-Messier M."/>
            <person name="Correll R.N."/>
            <person name="Xu J."/>
            <person name="Benard M.J."/>
            <person name="Yuan W."/>
            <person name="Drexler H."/>
            <person name="Parise L.V."/>
            <person name="Molkentin J.D."/>
        </authorList>
    </citation>
    <scope>INTERACTION WITH CACNA1C AND PPP3R1</scope>
    <scope>SUBCELLULAR LOCATION</scope>
    <scope>INDUCTION</scope>
    <scope>TISSUE SPECIFICITY</scope>
    <scope>DEVELOPMENTAL STAGE</scope>
</reference>
<reference key="15">
    <citation type="journal article" date="2012" name="Blood">
        <title>Calcium- and integrin-binding protein 1 regulates megakaryocyte ploidy, adhesion, and migration.</title>
        <authorList>
            <person name="Kostyak J.C."/>
            <person name="Naik M.U."/>
            <person name="Naik U.P."/>
        </authorList>
    </citation>
    <scope>FUNCTION</scope>
</reference>
<reference key="16">
    <citation type="journal article" date="2017" name="EMBO Mol. Med.">
        <title>CIB2, defective in isolated deafness, is key for auditory hair cell mechanotransduction and survival.</title>
        <authorList>
            <person name="Michel V."/>
            <person name="Booth K.T."/>
            <person name="Patni P."/>
            <person name="Cortese M."/>
            <person name="Azaiez H."/>
            <person name="Bahloul A."/>
            <person name="Kahrizi K."/>
            <person name="Labbe M."/>
            <person name="Emptoz A."/>
            <person name="Lelli A."/>
            <person name="Degardin J."/>
            <person name="Dupont T."/>
            <person name="Aghaie A."/>
            <person name="Oficjalska-Pham D."/>
            <person name="Picaud S."/>
            <person name="Najmabadi H."/>
            <person name="Smith R.J."/>
            <person name="Bowl M.R."/>
            <person name="Brown S.D."/>
            <person name="Avan P."/>
            <person name="Petit C."/>
            <person name="El-Amraoui A."/>
        </authorList>
    </citation>
    <scope>DEVELOPMENTAL STAGE</scope>
</reference>
<reference key="17">
    <citation type="journal article" date="2017" name="Front. Mol. Neurosci.">
        <title>Loss of CIB2 Causes Profound Hearing Loss and Abolishes Mechanoelectrical Transduction in Mice.</title>
        <authorList>
            <person name="Wang Y."/>
            <person name="Li J."/>
            <person name="Yao X."/>
            <person name="Li W."/>
            <person name="Du H."/>
            <person name="Tang M."/>
            <person name="Xiong W."/>
            <person name="Chai R."/>
            <person name="Xu Z."/>
        </authorList>
    </citation>
    <scope>TISSUE SPECIFICITY</scope>
    <scope>DISRUPTION PHENOTYPE</scope>
</reference>
<feature type="initiator methionine" description="Removed" evidence="2">
    <location>
        <position position="1"/>
    </location>
</feature>
<feature type="chain" id="PRO_0000073532" description="Calcium and integrin-binding protein 1">
    <location>
        <begin position="2"/>
        <end position="191"/>
    </location>
</feature>
<feature type="domain" description="EF-hand 1" evidence="3">
    <location>
        <begin position="103"/>
        <end position="138"/>
    </location>
</feature>
<feature type="domain" description="EF-hand 2" evidence="3">
    <location>
        <begin position="148"/>
        <end position="183"/>
    </location>
</feature>
<feature type="binding site" evidence="3">
    <location>
        <position position="116"/>
    </location>
    <ligand>
        <name>Ca(2+)</name>
        <dbReference type="ChEBI" id="CHEBI:29108"/>
        <label>1</label>
    </ligand>
</feature>
<feature type="binding site" evidence="3">
    <location>
        <position position="118"/>
    </location>
    <ligand>
        <name>Ca(2+)</name>
        <dbReference type="ChEBI" id="CHEBI:29108"/>
        <label>1</label>
    </ligand>
</feature>
<feature type="binding site" evidence="3">
    <location>
        <position position="120"/>
    </location>
    <ligand>
        <name>Ca(2+)</name>
        <dbReference type="ChEBI" id="CHEBI:29108"/>
        <label>1</label>
    </ligand>
</feature>
<feature type="binding site" evidence="3">
    <location>
        <position position="122"/>
    </location>
    <ligand>
        <name>Ca(2+)</name>
        <dbReference type="ChEBI" id="CHEBI:29108"/>
        <label>1</label>
    </ligand>
</feature>
<feature type="binding site" evidence="3">
    <location>
        <position position="127"/>
    </location>
    <ligand>
        <name>Ca(2+)</name>
        <dbReference type="ChEBI" id="CHEBI:29108"/>
        <label>1</label>
    </ligand>
</feature>
<feature type="binding site" evidence="3">
    <location>
        <position position="161"/>
    </location>
    <ligand>
        <name>Ca(2+)</name>
        <dbReference type="ChEBI" id="CHEBI:29108"/>
        <label>2</label>
    </ligand>
</feature>
<feature type="binding site" evidence="3">
    <location>
        <position position="163"/>
    </location>
    <ligand>
        <name>Ca(2+)</name>
        <dbReference type="ChEBI" id="CHEBI:29108"/>
        <label>2</label>
    </ligand>
</feature>
<feature type="binding site" evidence="3">
    <location>
        <position position="165"/>
    </location>
    <ligand>
        <name>Ca(2+)</name>
        <dbReference type="ChEBI" id="CHEBI:29108"/>
        <label>2</label>
    </ligand>
</feature>
<feature type="binding site" evidence="3">
    <location>
        <position position="167"/>
    </location>
    <ligand>
        <name>Ca(2+)</name>
        <dbReference type="ChEBI" id="CHEBI:29108"/>
        <label>2</label>
    </ligand>
</feature>
<feature type="binding site" evidence="3">
    <location>
        <position position="172"/>
    </location>
    <ligand>
        <name>Ca(2+)</name>
        <dbReference type="ChEBI" id="CHEBI:29108"/>
        <label>2</label>
    </ligand>
</feature>
<feature type="lipid moiety-binding region" description="N-myristoyl glycine" evidence="1">
    <location>
        <position position="2"/>
    </location>
</feature>
<comment type="function">
    <text evidence="2 5 6 9 11 12">Calcium-binding protein that plays a role in the regulation of numerous cellular processes, such as cell differentiation, cell division, cell proliferation, cell migration, thrombosis, angiogenesis, cardiac hypertrophy and apoptosis. Involved in bone marrow megakaryocyte differentiation by negatively regulating thrombopoietin-mediated signaling pathway. Participates in the endomitotic cell cycle of megakaryocyte, a form of mitosis in which both karyokinesis and cytokinesis are interrupted. Plays a role in integrin signaling by negatively regulating alpha-IIb/beta3 activation in thrombin-stimulated megakaryocytes preventing platelet aggregation. Up-regulates PTK2/FAK1 activity, and is also needed for the recruitment of PTK2/FAK1 to focal adhesions; it thus appears to play an important role in focal adhesion formation. Positively regulates cell migration on fibronectin in a CDC42-dependent manner, the effect being negatively regulated by PAK1. Functions as a negative regulator of stress activated MAP kinase (MAPK) signaling pathways. Down-regulates inositol 1,4,5-trisphosphate receptor-dependent calcium signaling. Involved in sphingosine kinase SPHK1 translocation to the plasma membrane in a N-myristoylation-dependent manner preventing TNF-alpha-induced apoptosis. Regulates serine/threonine-protein kinase PLK3 activity for proper completion of cell division progression. Plays a role in microtubule (MT) dynamics during neuronal development; disrupts the MT depolymerization activity of STMN2 attenuating NGF-induced neurite outgrowth and the MT reorganization at the edge of lamellipodia. Promotes cardiomyocyte hypertrophy via activation of the calcineurin/NFAT signaling pathway. Stimulates calcineurin PPP3R1 activity by mediating its anchoring to the sarcolemma. In ischemia-induced (pathological or adaptive) angiogenesis, stimulates endothelial cell proliferation, migration and microvessel formation by activating the PAK1 and ERK1/ERK2 signaling pathway. Also promotes cancer cell survival and proliferation. May regulate cell cycle and differentiation of spermatogenic germ cells, and/or differentiation of supporting Sertoli cells. Forms a complex with TMC6/EVER1 and TMC8/EVER2 in lymphocytes and keratynocytes where CIB1 stabilizes TMC6 and TMC8 levels and reciprocally (By similarity).</text>
</comment>
<comment type="subunit">
    <text evidence="1 2 7 8 10">Monomer. Interacts with the heterodimeric integrin alpha-IIb/beta3 (ITGA2B-ITGB3). Interacts with ITGA2B (via cytoplasmic domain); the interaction is direct and calcium-dependent. Interacts with the protein kinases PLK2/SNK and PRKDC (via the region immediately upstream of the kinase domain). Interacts with PLK3; the interaction inhibits PLK3 kinase activity. Interacts with PSEN2. Interacts (via C-terminus) with F8. Interacts with NBR1 (via C-terminus). Interacts with FEZ1 (via C-terminus). Interacts with UBR5 (via C-terminus); the interaction is sensitive to DNA damage, and may target CIB1 for ubiquitin-mediated degradation. Interacts with IFI6; the interaction is direct. Interacts with BCL2. Interacts with TAS1R2 (via C-terminus); the interaction is independent of the myristoylation state of CIB1. Interacts with ITPR3; the interaction occurs in a calcium dependent manner. Interacts with PTK2/FAK1. Interacts with MAP3K5; the interaction inhibits MAP3K5 activation by phosphorylation, and its subsequent interaction with TRAF2. Interacts (via C-terminal region) with STMN2 (via the N-terminal region); the interaction is direct, occurs in a calcium-dependent manner and attenuates the STMN2-induced neurite outgrowth inhibition. Interacts with SPHK1, the interaction occurs in a calcium-dependent manner. Interacts with ITGA2B (via C-terminal cytoplasmic tail); the interaction occurs upon platelet aggregation and is stabilized/increased in a calcium and magnesium-dependent manner. Interacts with PAK1 (via N-terminal region); the interaction is direct and occurs in a calcium-dependent manner. Interacts with RAC3 (via C-terminal region); the interaction induces their association with the cytoskeleton upon alpha-IIb/beta3 integrin-mediated adhesion. Interacts with ITGA5 and ITGAV (By similarity). Interacts with MYO1C. Interacts with ITGA2B (via C-terminal cytoplasmic tail region). Interacts (via C-terminal region) with PPP3R1 isoform 1 and isoform 2; the interactions increase upon cardiomyocytes hypertrophy. Interacts with CACNA1C; the interaction increases upon cardiomyocytes hypertrophy. Interacts and forms a complex with TMC6 and TMC8; the interaction stabilizes each component of the complex (By similarity).</text>
</comment>
<comment type="subcellular location">
    <subcellularLocation>
        <location evidence="2">Membrane</location>
        <topology evidence="2">Lipid-anchor</topology>
    </subcellularLocation>
    <subcellularLocation>
        <location evidence="2">Cell membrane</location>
        <location evidence="2">Sarcolemma</location>
    </subcellularLocation>
    <subcellularLocation>
        <location evidence="2">Cell membrane</location>
    </subcellularLocation>
    <subcellularLocation>
        <location evidence="2">Apical cell membrane</location>
    </subcellularLocation>
    <subcellularLocation>
        <location evidence="2">Cell projection</location>
        <location evidence="2">Ruffle membrane</location>
    </subcellularLocation>
    <subcellularLocation>
        <location evidence="2">Cell projection</location>
        <location evidence="2">Filopodium tip</location>
    </subcellularLocation>
    <subcellularLocation>
        <location evidence="2">Cell projection</location>
        <location evidence="2">Growth cone</location>
    </subcellularLocation>
    <subcellularLocation>
        <location evidence="2">Cell projection</location>
        <location evidence="2">Lamellipodium</location>
    </subcellularLocation>
    <subcellularLocation>
        <location evidence="2">Cytoplasm</location>
    </subcellularLocation>
    <subcellularLocation>
        <location evidence="2">Cytoplasm</location>
        <location evidence="2">Cytoskeleton</location>
    </subcellularLocation>
    <subcellularLocation>
        <location evidence="2">Cytoplasm</location>
        <location evidence="2">Cytoskeleton</location>
        <location evidence="2">Microtubule organizing center</location>
        <location evidence="2">Centrosome</location>
    </subcellularLocation>
    <subcellularLocation>
        <location evidence="2">Cytoplasm</location>
        <location evidence="2">Perinuclear region</location>
    </subcellularLocation>
    <subcellularLocation>
        <location evidence="2">Nucleus</location>
    </subcellularLocation>
    <subcellularLocation>
        <location evidence="2">Cell projection</location>
        <location evidence="2">Neuron projection</location>
    </subcellularLocation>
    <subcellularLocation>
        <location evidence="2">Perikaryon</location>
    </subcellularLocation>
    <text evidence="1">Colocalized with PPP3R1 at the cell membrane of cardiomyocytes in the hypertrophic heart (By similarity). Colocalized with NBR1 to the perinuclear region. Colocalizes with TAS1R2 in apical regions of taste receptor cells. Colocalized with RAC3 in the perinuclear area and at the cell periphery. Colocalized with PAK1 within membrane ruffles during cell spreading upon readhesion to fibronectin. Redistributed to the cytoskeleton upon platelet aggregation. Translocates from the cytosol to the plasma membrane in a calcium-dependent manner. Colocalized with PLK3 at centrosomes in ductal breast carcinoma cells.</text>
</comment>
<comment type="tissue specificity">
    <text evidence="5 6 8 10 13">Expressed strongly in Sertoli cells, weakly in pachytene spermatocytes, round spermatids and condensing spermatids (at protein level) (PubMed:16982698). Expressed in testis (PubMed:16982698). Expressed in cardiac myocytes and endothelial cells (PubMed:17975111, PubMed:18989529, PubMed:20639889). Expressed in heart, liver, spleen, lung, kidney, brain and inner ear (PubMed:29255404). In the inner ear, expressed in the vestibule, basilar membrane and spiral ganglion cells (PubMed:29255404).</text>
</comment>
<comment type="developmental stage">
    <text evidence="4 10">Expressed in the heart at 16 dpc (at protein level) (PubMed:20639889). On P7, detected mainly at the apical surface of hair cells (PubMed:16418530). In outer hair cells, it was observed in the kinocilium and in the basal body region at the periphery of the hair cell (PubMed:16418530).</text>
</comment>
<comment type="induction">
    <text evidence="10">Up-regulated upon cardiomyocytes hypertrophy (at protein level).</text>
</comment>
<comment type="domain">
    <text evidence="1">The EF-hands may also bind magnesium ions in the presence of high Mg(2+) levels and low Ca(2+) levels.</text>
</comment>
<comment type="disruption phenotype">
    <text evidence="5 8 9 11 12 13">Mice grow normally and are healthy; other family members (CIB2, CIB3 and CIB4) may probably compensate for CIB1 loss (PubMed:18989529). Males are sterile: spermatogenic cells can complete both mitotic and meiotic divisions, but postmeiotic spermatids do not develop normally and sperm is not produced (PubMed:16982698). Display increased bone marrow megakaryocytes and circulating platelets (PubMed:22128142). Mice display tail bleeding time increase, impaired thrombus formation and angiogenesis defect after ischemia (PubMed:19691476). Show compromised tumor growth (PubMed:20804551). Does not affect auditory function (PubMed:29255404).</text>
</comment>
<comment type="miscellaneous">
    <text evidence="1">The binding of either calcium or magnesium significantly increases the structural stability of the protein in comparison to apo-CIB (calcium- and magnesium-free form).</text>
</comment>
<name>CIB1_MOUSE</name>